<reference key="1">
    <citation type="journal article" date="2009" name="Appl. Environ. Microbiol.">
        <title>Three genomes from the phylum Acidobacteria provide insight into the lifestyles of these microorganisms in soils.</title>
        <authorList>
            <person name="Ward N.L."/>
            <person name="Challacombe J.F."/>
            <person name="Janssen P.H."/>
            <person name="Henrissat B."/>
            <person name="Coutinho P.M."/>
            <person name="Wu M."/>
            <person name="Xie G."/>
            <person name="Haft D.H."/>
            <person name="Sait M."/>
            <person name="Badger J."/>
            <person name="Barabote R.D."/>
            <person name="Bradley B."/>
            <person name="Brettin T.S."/>
            <person name="Brinkac L.M."/>
            <person name="Bruce D."/>
            <person name="Creasy T."/>
            <person name="Daugherty S.C."/>
            <person name="Davidsen T.M."/>
            <person name="DeBoy R.T."/>
            <person name="Detter J.C."/>
            <person name="Dodson R.J."/>
            <person name="Durkin A.S."/>
            <person name="Ganapathy A."/>
            <person name="Gwinn-Giglio M."/>
            <person name="Han C.S."/>
            <person name="Khouri H."/>
            <person name="Kiss H."/>
            <person name="Kothari S.P."/>
            <person name="Madupu R."/>
            <person name="Nelson K.E."/>
            <person name="Nelson W.C."/>
            <person name="Paulsen I."/>
            <person name="Penn K."/>
            <person name="Ren Q."/>
            <person name="Rosovitz M.J."/>
            <person name="Selengut J.D."/>
            <person name="Shrivastava S."/>
            <person name="Sullivan S.A."/>
            <person name="Tapia R."/>
            <person name="Thompson L.S."/>
            <person name="Watkins K.L."/>
            <person name="Yang Q."/>
            <person name="Yu C."/>
            <person name="Zafar N."/>
            <person name="Zhou L."/>
            <person name="Kuske C.R."/>
        </authorList>
    </citation>
    <scope>NUCLEOTIDE SEQUENCE [LARGE SCALE GENOMIC DNA]</scope>
    <source>
        <strain>Ellin345</strain>
    </source>
</reference>
<feature type="chain" id="PRO_0000340929" description="4-hydroxy-tetrahydrodipicolinate synthase">
    <location>
        <begin position="1"/>
        <end position="300"/>
    </location>
</feature>
<feature type="active site" description="Proton donor/acceptor" evidence="1">
    <location>
        <position position="135"/>
    </location>
</feature>
<feature type="active site" description="Schiff-base intermediate with substrate" evidence="1">
    <location>
        <position position="163"/>
    </location>
</feature>
<feature type="binding site" evidence="1">
    <location>
        <position position="46"/>
    </location>
    <ligand>
        <name>pyruvate</name>
        <dbReference type="ChEBI" id="CHEBI:15361"/>
    </ligand>
</feature>
<feature type="binding site" evidence="1">
    <location>
        <position position="205"/>
    </location>
    <ligand>
        <name>pyruvate</name>
        <dbReference type="ChEBI" id="CHEBI:15361"/>
    </ligand>
</feature>
<feature type="site" description="Part of a proton relay during catalysis" evidence="1">
    <location>
        <position position="45"/>
    </location>
</feature>
<feature type="site" description="Part of a proton relay during catalysis" evidence="1">
    <location>
        <position position="109"/>
    </location>
</feature>
<gene>
    <name evidence="1" type="primary">dapA</name>
    <name type="ordered locus">Acid345_2493</name>
</gene>
<organism>
    <name type="scientific">Koribacter versatilis (strain Ellin345)</name>
    <dbReference type="NCBI Taxonomy" id="204669"/>
    <lineage>
        <taxon>Bacteria</taxon>
        <taxon>Pseudomonadati</taxon>
        <taxon>Acidobacteriota</taxon>
        <taxon>Terriglobia</taxon>
        <taxon>Terriglobales</taxon>
        <taxon>Candidatus Korobacteraceae</taxon>
        <taxon>Candidatus Korobacter</taxon>
    </lineage>
</organism>
<name>DAPA_KORVE</name>
<comment type="function">
    <text evidence="1">Catalyzes the condensation of (S)-aspartate-beta-semialdehyde [(S)-ASA] and pyruvate to 4-hydroxy-tetrahydrodipicolinate (HTPA).</text>
</comment>
<comment type="catalytic activity">
    <reaction evidence="1">
        <text>L-aspartate 4-semialdehyde + pyruvate = (2S,4S)-4-hydroxy-2,3,4,5-tetrahydrodipicolinate + H2O + H(+)</text>
        <dbReference type="Rhea" id="RHEA:34171"/>
        <dbReference type="ChEBI" id="CHEBI:15361"/>
        <dbReference type="ChEBI" id="CHEBI:15377"/>
        <dbReference type="ChEBI" id="CHEBI:15378"/>
        <dbReference type="ChEBI" id="CHEBI:67139"/>
        <dbReference type="ChEBI" id="CHEBI:537519"/>
        <dbReference type="EC" id="4.3.3.7"/>
    </reaction>
</comment>
<comment type="pathway">
    <text evidence="1">Amino-acid biosynthesis; L-lysine biosynthesis via DAP pathway; (S)-tetrahydrodipicolinate from L-aspartate: step 3/4.</text>
</comment>
<comment type="subunit">
    <text evidence="1">Homotetramer; dimer of dimers.</text>
</comment>
<comment type="subcellular location">
    <subcellularLocation>
        <location evidence="1">Cytoplasm</location>
    </subcellularLocation>
</comment>
<comment type="similarity">
    <text evidence="1">Belongs to the DapA family.</text>
</comment>
<comment type="caution">
    <text evidence="2">Was originally thought to be a dihydrodipicolinate synthase (DHDPS), catalyzing the condensation of (S)-aspartate-beta-semialdehyde [(S)-ASA] and pyruvate to dihydrodipicolinate (DHDP). However, it was shown in E.coli that the product of the enzymatic reaction is not dihydrodipicolinate but in fact (4S)-4-hydroxy-2,3,4,5-tetrahydro-(2S)-dipicolinic acid (HTPA), and that the consecutive dehydration reaction leading to DHDP is not spontaneous but catalyzed by DapB.</text>
</comment>
<evidence type="ECO:0000255" key="1">
    <source>
        <dbReference type="HAMAP-Rule" id="MF_00418"/>
    </source>
</evidence>
<evidence type="ECO:0000305" key="2"/>
<sequence>MKLRGCGTALVTPFKQDGSVDFAAQRALVEWQIESGIDFLVPCGTTGETPTLSHDEWLKVIAQTVEVNHGRVPIVAGATSNNTAEAVEKAKEVAAIKGVDAILTASPYYNKPTQEGQYLHFKAIAEAVDKPLVLYNVPGRTAANIETATLLRLAKIPNIIAVKEASGSLPQIMDVCAQKPEDFTVLSGDDALTLPILAVGGVGLVSVASNQIPKELSEMVRAALNNDWATARKLHNHFLALMNANFLESNPGPVKAVLAMMGRIEENYRLPMVPMRPENRAKLEKIAAEAGVLKNATVAQ</sequence>
<keyword id="KW-0028">Amino-acid biosynthesis</keyword>
<keyword id="KW-0963">Cytoplasm</keyword>
<keyword id="KW-0220">Diaminopimelate biosynthesis</keyword>
<keyword id="KW-0456">Lyase</keyword>
<keyword id="KW-0457">Lysine biosynthesis</keyword>
<keyword id="KW-1185">Reference proteome</keyword>
<keyword id="KW-0704">Schiff base</keyword>
<proteinExistence type="inferred from homology"/>
<protein>
    <recommendedName>
        <fullName evidence="1">4-hydroxy-tetrahydrodipicolinate synthase</fullName>
        <shortName evidence="1">HTPA synthase</shortName>
        <ecNumber evidence="1">4.3.3.7</ecNumber>
    </recommendedName>
</protein>
<dbReference type="EC" id="4.3.3.7" evidence="1"/>
<dbReference type="EMBL" id="CP000360">
    <property type="protein sequence ID" value="ABF41494.1"/>
    <property type="molecule type" value="Genomic_DNA"/>
</dbReference>
<dbReference type="RefSeq" id="WP_011523295.1">
    <property type="nucleotide sequence ID" value="NC_008009.1"/>
</dbReference>
<dbReference type="SMR" id="Q1INQ6"/>
<dbReference type="STRING" id="204669.Acid345_2493"/>
<dbReference type="EnsemblBacteria" id="ABF41494">
    <property type="protein sequence ID" value="ABF41494"/>
    <property type="gene ID" value="Acid345_2493"/>
</dbReference>
<dbReference type="KEGG" id="aba:Acid345_2493"/>
<dbReference type="eggNOG" id="COG0329">
    <property type="taxonomic scope" value="Bacteria"/>
</dbReference>
<dbReference type="HOGENOM" id="CLU_049343_7_1_0"/>
<dbReference type="OrthoDB" id="9782828at2"/>
<dbReference type="UniPathway" id="UPA00034">
    <property type="reaction ID" value="UER00017"/>
</dbReference>
<dbReference type="Proteomes" id="UP000002432">
    <property type="component" value="Chromosome"/>
</dbReference>
<dbReference type="GO" id="GO:0005829">
    <property type="term" value="C:cytosol"/>
    <property type="evidence" value="ECO:0007669"/>
    <property type="project" value="TreeGrafter"/>
</dbReference>
<dbReference type="GO" id="GO:0008840">
    <property type="term" value="F:4-hydroxy-tetrahydrodipicolinate synthase activity"/>
    <property type="evidence" value="ECO:0007669"/>
    <property type="project" value="UniProtKB-UniRule"/>
</dbReference>
<dbReference type="GO" id="GO:0019877">
    <property type="term" value="P:diaminopimelate biosynthetic process"/>
    <property type="evidence" value="ECO:0007669"/>
    <property type="project" value="UniProtKB-UniRule"/>
</dbReference>
<dbReference type="GO" id="GO:0009089">
    <property type="term" value="P:lysine biosynthetic process via diaminopimelate"/>
    <property type="evidence" value="ECO:0007669"/>
    <property type="project" value="UniProtKB-UniRule"/>
</dbReference>
<dbReference type="CDD" id="cd00950">
    <property type="entry name" value="DHDPS"/>
    <property type="match status" value="1"/>
</dbReference>
<dbReference type="Gene3D" id="3.20.20.70">
    <property type="entry name" value="Aldolase class I"/>
    <property type="match status" value="1"/>
</dbReference>
<dbReference type="HAMAP" id="MF_00418">
    <property type="entry name" value="DapA"/>
    <property type="match status" value="1"/>
</dbReference>
<dbReference type="InterPro" id="IPR013785">
    <property type="entry name" value="Aldolase_TIM"/>
</dbReference>
<dbReference type="InterPro" id="IPR005263">
    <property type="entry name" value="DapA"/>
</dbReference>
<dbReference type="InterPro" id="IPR002220">
    <property type="entry name" value="DapA-like"/>
</dbReference>
<dbReference type="InterPro" id="IPR020625">
    <property type="entry name" value="Schiff_base-form_aldolases_AS"/>
</dbReference>
<dbReference type="NCBIfam" id="TIGR00674">
    <property type="entry name" value="dapA"/>
    <property type="match status" value="1"/>
</dbReference>
<dbReference type="PANTHER" id="PTHR12128:SF66">
    <property type="entry name" value="4-HYDROXY-2-OXOGLUTARATE ALDOLASE, MITOCHONDRIAL"/>
    <property type="match status" value="1"/>
</dbReference>
<dbReference type="PANTHER" id="PTHR12128">
    <property type="entry name" value="DIHYDRODIPICOLINATE SYNTHASE"/>
    <property type="match status" value="1"/>
</dbReference>
<dbReference type="Pfam" id="PF00701">
    <property type="entry name" value="DHDPS"/>
    <property type="match status" value="1"/>
</dbReference>
<dbReference type="PIRSF" id="PIRSF001365">
    <property type="entry name" value="DHDPS"/>
    <property type="match status" value="1"/>
</dbReference>
<dbReference type="PRINTS" id="PR00146">
    <property type="entry name" value="DHPICSNTHASE"/>
</dbReference>
<dbReference type="SMART" id="SM01130">
    <property type="entry name" value="DHDPS"/>
    <property type="match status" value="1"/>
</dbReference>
<dbReference type="SUPFAM" id="SSF51569">
    <property type="entry name" value="Aldolase"/>
    <property type="match status" value="1"/>
</dbReference>
<dbReference type="PROSITE" id="PS00666">
    <property type="entry name" value="DHDPS_2"/>
    <property type="match status" value="1"/>
</dbReference>
<accession>Q1INQ6</accession>